<comment type="function">
    <text>Brain peptide responsible for activation of prothoracic glands to produce ecdysone in insects.</text>
</comment>
<comment type="subunit">
    <text>Heterodimer of a B chain and an A chain linked by two disulfide bonds.</text>
</comment>
<comment type="subcellular location">
    <subcellularLocation>
        <location>Secreted</location>
    </subcellularLocation>
</comment>
<comment type="miscellaneous">
    <text>Silk worm has two kinds of PTTH: 4K-PTTH and 22K-PTTH; there are many forms of 4K-PTTH.</text>
</comment>
<comment type="similarity">
    <text evidence="3">Belongs to the insulin family.</text>
</comment>
<reference key="1">
    <citation type="journal article" date="1996" name="J. Mol. Biol.">
        <title>Multiple gene copies for bombyxin, an insulin-related peptide of the silkmoth Bombyx mori: structural signs for gene rearrangement and duplication responsible for generation of multiple molecular forms of bombyxin.</title>
        <authorList>
            <person name="Kondo H."/>
            <person name="Ino M."/>
            <person name="Suzuki A."/>
            <person name="Ishizaki H."/>
            <person name="Iwami M."/>
        </authorList>
    </citation>
    <scope>NUCLEOTIDE SEQUENCE [GENOMIC DNA]</scope>
</reference>
<feature type="signal peptide" evidence="2">
    <location>
        <begin position="1"/>
        <end position="20"/>
    </location>
</feature>
<feature type="peptide" id="PRO_0000015995" description="Bombyxin B-3 B chain">
    <location>
        <begin position="21"/>
        <end position="46"/>
    </location>
</feature>
<feature type="propeptide" id="PRO_0000015996" description="C peptide like">
    <location>
        <begin position="49"/>
        <end position="67"/>
    </location>
</feature>
<feature type="peptide" id="PRO_0000015997" description="Bombyxin B-3 A chain">
    <location>
        <begin position="70"/>
        <end position="90"/>
    </location>
</feature>
<feature type="disulfide bond" description="Interchain (between B and A chains)" evidence="1">
    <location>
        <begin position="30"/>
        <end position="76"/>
    </location>
</feature>
<feature type="disulfide bond" description="Interchain (between B and A chains)" evidence="1">
    <location>
        <begin position="42"/>
        <end position="89"/>
    </location>
</feature>
<feature type="disulfide bond" evidence="1">
    <location>
        <begin position="75"/>
        <end position="80"/>
    </location>
</feature>
<proteinExistence type="inferred from homology"/>
<gene>
    <name type="primary">BBXB3</name>
</gene>
<evidence type="ECO:0000250" key="1"/>
<evidence type="ECO:0000255" key="2"/>
<evidence type="ECO:0000305" key="3"/>
<dbReference type="EMBL" id="D00778">
    <property type="protein sequence ID" value="BAA00674.1"/>
    <property type="molecule type" value="Genomic_DNA"/>
</dbReference>
<dbReference type="PIR" id="S69491">
    <property type="entry name" value="S69491"/>
</dbReference>
<dbReference type="FunCoup" id="P26737">
    <property type="interactions" value="162"/>
</dbReference>
<dbReference type="HOGENOM" id="CLU_125164_2_0_1"/>
<dbReference type="InParanoid" id="P26737"/>
<dbReference type="Proteomes" id="UP000005204">
    <property type="component" value="Unassembled WGS sequence"/>
</dbReference>
<dbReference type="GO" id="GO:0005615">
    <property type="term" value="C:extracellular space"/>
    <property type="evidence" value="ECO:0007669"/>
    <property type="project" value="InterPro"/>
</dbReference>
<dbReference type="GO" id="GO:0008083">
    <property type="term" value="F:growth factor activity"/>
    <property type="evidence" value="ECO:0007669"/>
    <property type="project" value="InterPro"/>
</dbReference>
<dbReference type="GO" id="GO:0005179">
    <property type="term" value="F:hormone activity"/>
    <property type="evidence" value="ECO:0007669"/>
    <property type="project" value="UniProtKB-KW"/>
</dbReference>
<dbReference type="CDD" id="cd04366">
    <property type="entry name" value="IlGF_insulin_bombyxin_like"/>
    <property type="match status" value="1"/>
</dbReference>
<dbReference type="Gene3D" id="1.10.100.10">
    <property type="entry name" value="Insulin-like"/>
    <property type="match status" value="1"/>
</dbReference>
<dbReference type="InterPro" id="IPR017097">
    <property type="entry name" value="Bombyxin"/>
</dbReference>
<dbReference type="InterPro" id="IPR027285">
    <property type="entry name" value="Bombyxin_B"/>
</dbReference>
<dbReference type="InterPro" id="IPR016179">
    <property type="entry name" value="Insulin-like"/>
</dbReference>
<dbReference type="InterPro" id="IPR036438">
    <property type="entry name" value="Insulin-like_sf"/>
</dbReference>
<dbReference type="InterPro" id="IPR022353">
    <property type="entry name" value="Insulin_CS"/>
</dbReference>
<dbReference type="InterPro" id="IPR022352">
    <property type="entry name" value="Insulin_family"/>
</dbReference>
<dbReference type="PANTHER" id="PTHR13647:SF4">
    <property type="entry name" value="INSULIN-LIKE PEPTIDE 1-RELATED"/>
    <property type="match status" value="1"/>
</dbReference>
<dbReference type="PANTHER" id="PTHR13647">
    <property type="entry name" value="INSULIN-LIKE PEPTIDE 2-RELATED"/>
    <property type="match status" value="1"/>
</dbReference>
<dbReference type="Pfam" id="PF00049">
    <property type="entry name" value="Insulin"/>
    <property type="match status" value="1"/>
</dbReference>
<dbReference type="PIRSF" id="PIRSF037038">
    <property type="entry name" value="Bombyxin"/>
    <property type="match status" value="1"/>
</dbReference>
<dbReference type="PIRSF" id="PIRSF500313">
    <property type="entry name" value="Bombyxin_B"/>
    <property type="match status" value="1"/>
</dbReference>
<dbReference type="PRINTS" id="PR02003">
    <property type="entry name" value="BOMBYXIN"/>
</dbReference>
<dbReference type="PRINTS" id="PR00276">
    <property type="entry name" value="INSULINFAMLY"/>
</dbReference>
<dbReference type="SMART" id="SM00078">
    <property type="entry name" value="IlGF"/>
    <property type="match status" value="1"/>
</dbReference>
<dbReference type="SUPFAM" id="SSF56994">
    <property type="entry name" value="Insulin-like"/>
    <property type="match status" value="1"/>
</dbReference>
<dbReference type="PROSITE" id="PS00262">
    <property type="entry name" value="INSULIN"/>
    <property type="match status" value="1"/>
</dbReference>
<name>BXB3_BOMMO</name>
<sequence length="90" mass="10152">MMKTTIMFMLVVVISLTYSSEEQEVARTYCGAHLANTLADLCFGVEKRSGAQYAPYFWTRQYLGSRGKRGVVDECCFRPCTLDVLLSYCG</sequence>
<protein>
    <recommendedName>
        <fullName>Bombyxin B-3</fullName>
        <shortName>BBX-B3</shortName>
    </recommendedName>
    <alternativeName>
        <fullName>4K-prothoracicotropic hormone</fullName>
        <shortName>4K-PTTH</shortName>
    </alternativeName>
    <component>
        <recommendedName>
            <fullName>Bombyxin B-3 B chain</fullName>
        </recommendedName>
    </component>
    <component>
        <recommendedName>
            <fullName>Bombyxin B-3 A chain</fullName>
        </recommendedName>
    </component>
</protein>
<organism>
    <name type="scientific">Bombyx mori</name>
    <name type="common">Silk moth</name>
    <dbReference type="NCBI Taxonomy" id="7091"/>
    <lineage>
        <taxon>Eukaryota</taxon>
        <taxon>Metazoa</taxon>
        <taxon>Ecdysozoa</taxon>
        <taxon>Arthropoda</taxon>
        <taxon>Hexapoda</taxon>
        <taxon>Insecta</taxon>
        <taxon>Pterygota</taxon>
        <taxon>Neoptera</taxon>
        <taxon>Endopterygota</taxon>
        <taxon>Lepidoptera</taxon>
        <taxon>Glossata</taxon>
        <taxon>Ditrysia</taxon>
        <taxon>Bombycoidea</taxon>
        <taxon>Bombycidae</taxon>
        <taxon>Bombycinae</taxon>
        <taxon>Bombyx</taxon>
    </lineage>
</organism>
<keyword id="KW-0165">Cleavage on pair of basic residues</keyword>
<keyword id="KW-1015">Disulfide bond</keyword>
<keyword id="KW-0372">Hormone</keyword>
<keyword id="KW-1185">Reference proteome</keyword>
<keyword id="KW-0964">Secreted</keyword>
<keyword id="KW-0732">Signal</keyword>
<accession>P26737</accession>